<gene>
    <name evidence="1" type="primary">rdgC</name>
    <name type="ordered locus">ECH74115_0468</name>
</gene>
<sequence>MLWFKNLMVYRLSREISLRAEEMEKQLASMAFTPCGSQDMAKMGWVPPMGSHSDALTHVANGQIVICARKEEKILPSPVIKQALEAKIAKLEAEQARKLKKTEKDSLKDEVLHSLLPRAFSRFSQTMMWIDTVNGLIMVDCASAKKAEDTLALLRKSLGSLPVVPLSMANPIELTLTEWVRSGSAAQGFQLLDEAELKSLLEDGGVIRAKKQDLTSEEITNHIEAGKVVTKLALDWQQRIQFVMCDDGSLKRLKFCDELRDQNEDIDREDFAQRFDADFILMTGELAALIQNLIEGLGGEAQR</sequence>
<proteinExistence type="inferred from homology"/>
<organism>
    <name type="scientific">Escherichia coli O157:H7 (strain EC4115 / EHEC)</name>
    <dbReference type="NCBI Taxonomy" id="444450"/>
    <lineage>
        <taxon>Bacteria</taxon>
        <taxon>Pseudomonadati</taxon>
        <taxon>Pseudomonadota</taxon>
        <taxon>Gammaproteobacteria</taxon>
        <taxon>Enterobacterales</taxon>
        <taxon>Enterobacteriaceae</taxon>
        <taxon>Escherichia</taxon>
    </lineage>
</organism>
<name>RDGC_ECO5E</name>
<comment type="function">
    <text evidence="1">May be involved in recombination.</text>
</comment>
<comment type="subcellular location">
    <subcellularLocation>
        <location evidence="1">Cytoplasm</location>
        <location evidence="1">Nucleoid</location>
    </subcellularLocation>
</comment>
<comment type="similarity">
    <text evidence="1">Belongs to the RdgC family.</text>
</comment>
<dbReference type="EMBL" id="CP001164">
    <property type="protein sequence ID" value="ACI38781.1"/>
    <property type="molecule type" value="Genomic_DNA"/>
</dbReference>
<dbReference type="RefSeq" id="WP_001301975.1">
    <property type="nucleotide sequence ID" value="NC_011353.1"/>
</dbReference>
<dbReference type="SMR" id="B5Z2U5"/>
<dbReference type="KEGG" id="ecf:ECH74115_0468"/>
<dbReference type="HOGENOM" id="CLU_052038_1_1_6"/>
<dbReference type="GO" id="GO:0043590">
    <property type="term" value="C:bacterial nucleoid"/>
    <property type="evidence" value="ECO:0007669"/>
    <property type="project" value="TreeGrafter"/>
</dbReference>
<dbReference type="GO" id="GO:0005737">
    <property type="term" value="C:cytoplasm"/>
    <property type="evidence" value="ECO:0007669"/>
    <property type="project" value="UniProtKB-UniRule"/>
</dbReference>
<dbReference type="GO" id="GO:0003690">
    <property type="term" value="F:double-stranded DNA binding"/>
    <property type="evidence" value="ECO:0007669"/>
    <property type="project" value="TreeGrafter"/>
</dbReference>
<dbReference type="GO" id="GO:0006310">
    <property type="term" value="P:DNA recombination"/>
    <property type="evidence" value="ECO:0007669"/>
    <property type="project" value="UniProtKB-UniRule"/>
</dbReference>
<dbReference type="GO" id="GO:0000018">
    <property type="term" value="P:regulation of DNA recombination"/>
    <property type="evidence" value="ECO:0007669"/>
    <property type="project" value="TreeGrafter"/>
</dbReference>
<dbReference type="HAMAP" id="MF_00194">
    <property type="entry name" value="RdgC"/>
    <property type="match status" value="1"/>
</dbReference>
<dbReference type="InterPro" id="IPR007476">
    <property type="entry name" value="RdgC"/>
</dbReference>
<dbReference type="NCBIfam" id="NF001460">
    <property type="entry name" value="PRK00321.1-1"/>
    <property type="match status" value="1"/>
</dbReference>
<dbReference type="NCBIfam" id="NF001462">
    <property type="entry name" value="PRK00321.1-3"/>
    <property type="match status" value="1"/>
</dbReference>
<dbReference type="NCBIfam" id="NF001464">
    <property type="entry name" value="PRK00321.1-5"/>
    <property type="match status" value="1"/>
</dbReference>
<dbReference type="PANTHER" id="PTHR38103">
    <property type="entry name" value="RECOMBINATION-ASSOCIATED PROTEIN RDGC"/>
    <property type="match status" value="1"/>
</dbReference>
<dbReference type="PANTHER" id="PTHR38103:SF1">
    <property type="entry name" value="RECOMBINATION-ASSOCIATED PROTEIN RDGC"/>
    <property type="match status" value="1"/>
</dbReference>
<dbReference type="Pfam" id="PF04381">
    <property type="entry name" value="RdgC"/>
    <property type="match status" value="1"/>
</dbReference>
<reference key="1">
    <citation type="journal article" date="2011" name="Proc. Natl. Acad. Sci. U.S.A.">
        <title>Genomic anatomy of Escherichia coli O157:H7 outbreaks.</title>
        <authorList>
            <person name="Eppinger M."/>
            <person name="Mammel M.K."/>
            <person name="Leclerc J.E."/>
            <person name="Ravel J."/>
            <person name="Cebula T.A."/>
        </authorList>
    </citation>
    <scope>NUCLEOTIDE SEQUENCE [LARGE SCALE GENOMIC DNA]</scope>
    <source>
        <strain>EC4115 / EHEC</strain>
    </source>
</reference>
<protein>
    <recommendedName>
        <fullName evidence="1">Recombination-associated protein RdgC</fullName>
    </recommendedName>
</protein>
<feature type="chain" id="PRO_1000099060" description="Recombination-associated protein RdgC">
    <location>
        <begin position="1"/>
        <end position="303"/>
    </location>
</feature>
<keyword id="KW-0963">Cytoplasm</keyword>
<keyword id="KW-0233">DNA recombination</keyword>
<evidence type="ECO:0000255" key="1">
    <source>
        <dbReference type="HAMAP-Rule" id="MF_00194"/>
    </source>
</evidence>
<accession>B5Z2U5</accession>